<comment type="function">
    <text evidence="1">The RecF protein is involved in DNA metabolism; it is required for DNA replication and normal SOS inducibility. RecF binds preferentially to single-stranded, linear DNA. It also seems to bind ATP.</text>
</comment>
<comment type="subcellular location">
    <subcellularLocation>
        <location evidence="1">Cytoplasm</location>
    </subcellularLocation>
</comment>
<comment type="similarity">
    <text evidence="1">Belongs to the RecF family.</text>
</comment>
<keyword id="KW-0067">ATP-binding</keyword>
<keyword id="KW-0963">Cytoplasm</keyword>
<keyword id="KW-0227">DNA damage</keyword>
<keyword id="KW-0234">DNA repair</keyword>
<keyword id="KW-0235">DNA replication</keyword>
<keyword id="KW-0238">DNA-binding</keyword>
<keyword id="KW-0547">Nucleotide-binding</keyword>
<keyword id="KW-1185">Reference proteome</keyword>
<keyword id="KW-0742">SOS response</keyword>
<name>RECF_PELTS</name>
<evidence type="ECO:0000255" key="1">
    <source>
        <dbReference type="HAMAP-Rule" id="MF_00365"/>
    </source>
</evidence>
<organism>
    <name type="scientific">Pelotomaculum thermopropionicum (strain DSM 13744 / JCM 10971 / SI)</name>
    <dbReference type="NCBI Taxonomy" id="370438"/>
    <lineage>
        <taxon>Bacteria</taxon>
        <taxon>Bacillati</taxon>
        <taxon>Bacillota</taxon>
        <taxon>Clostridia</taxon>
        <taxon>Eubacteriales</taxon>
        <taxon>Desulfotomaculaceae</taxon>
        <taxon>Pelotomaculum</taxon>
    </lineage>
</organism>
<gene>
    <name evidence="1" type="primary">recF</name>
    <name type="ordered locus">PTH_0003</name>
</gene>
<reference key="1">
    <citation type="journal article" date="2008" name="Genome Res.">
        <title>The genome of Pelotomaculum thermopropionicum reveals niche-associated evolution in anaerobic microbiota.</title>
        <authorList>
            <person name="Kosaka T."/>
            <person name="Kato S."/>
            <person name="Shimoyama T."/>
            <person name="Ishii S."/>
            <person name="Abe T."/>
            <person name="Watanabe K."/>
        </authorList>
    </citation>
    <scope>NUCLEOTIDE SEQUENCE [LARGE SCALE GENOMIC DNA]</scope>
    <source>
        <strain>DSM 13744 / JCM 10971 / SI</strain>
    </source>
</reference>
<protein>
    <recommendedName>
        <fullName evidence="1">DNA replication and repair protein RecF</fullName>
    </recommendedName>
</protein>
<sequence>MLLRRLEMLNFRNFARQAVEPGLYFNVLSGRNAQGKTNILESIYLACTGRSFRTAREKELIKREKEFSSIRCLFETRGREVEVKVTLVPGRKRIEVNGVLKSGHPFGWPGVVLFTPDDLVMIKGSPAERRRFLDYDLGPFHPHYAHCLDRYNRVLSQRNALLREAKEKRTTGGPLEVWDEQLCRYGSRLLFLRVSLLKKFFPAIRALHRELTEGAENIEISYLSSLKIGEECGEDEIYERFSGELRLVRDEEIARMQTLVGPHRDDLHIKVDGHDARVYCSQGQQRTIVLTLKVFLIEQWRSETGEYPILLLDDVLFELDDNRREALMCRLGGLVQTFLTCTRVNFDIEGFKAKVFTVSGGEVT</sequence>
<dbReference type="EMBL" id="AP009389">
    <property type="protein sequence ID" value="BAF58184.1"/>
    <property type="molecule type" value="Genomic_DNA"/>
</dbReference>
<dbReference type="SMR" id="A5D6E6"/>
<dbReference type="STRING" id="370438.PTH_0003"/>
<dbReference type="KEGG" id="pth:PTH_0003"/>
<dbReference type="eggNOG" id="COG1195">
    <property type="taxonomic scope" value="Bacteria"/>
</dbReference>
<dbReference type="HOGENOM" id="CLU_040267_0_1_9"/>
<dbReference type="Proteomes" id="UP000006556">
    <property type="component" value="Chromosome"/>
</dbReference>
<dbReference type="GO" id="GO:0005737">
    <property type="term" value="C:cytoplasm"/>
    <property type="evidence" value="ECO:0007669"/>
    <property type="project" value="UniProtKB-SubCell"/>
</dbReference>
<dbReference type="GO" id="GO:0005524">
    <property type="term" value="F:ATP binding"/>
    <property type="evidence" value="ECO:0007669"/>
    <property type="project" value="UniProtKB-UniRule"/>
</dbReference>
<dbReference type="GO" id="GO:0016887">
    <property type="term" value="F:ATP hydrolysis activity"/>
    <property type="evidence" value="ECO:0007669"/>
    <property type="project" value="InterPro"/>
</dbReference>
<dbReference type="GO" id="GO:0003697">
    <property type="term" value="F:single-stranded DNA binding"/>
    <property type="evidence" value="ECO:0007669"/>
    <property type="project" value="UniProtKB-UniRule"/>
</dbReference>
<dbReference type="GO" id="GO:0006260">
    <property type="term" value="P:DNA replication"/>
    <property type="evidence" value="ECO:0007669"/>
    <property type="project" value="UniProtKB-UniRule"/>
</dbReference>
<dbReference type="GO" id="GO:0000731">
    <property type="term" value="P:DNA synthesis involved in DNA repair"/>
    <property type="evidence" value="ECO:0007669"/>
    <property type="project" value="TreeGrafter"/>
</dbReference>
<dbReference type="GO" id="GO:0006302">
    <property type="term" value="P:double-strand break repair"/>
    <property type="evidence" value="ECO:0007669"/>
    <property type="project" value="InterPro"/>
</dbReference>
<dbReference type="GO" id="GO:0009432">
    <property type="term" value="P:SOS response"/>
    <property type="evidence" value="ECO:0007669"/>
    <property type="project" value="UniProtKB-UniRule"/>
</dbReference>
<dbReference type="Gene3D" id="3.40.50.300">
    <property type="entry name" value="P-loop containing nucleotide triphosphate hydrolases"/>
    <property type="match status" value="1"/>
</dbReference>
<dbReference type="Gene3D" id="1.20.1050.90">
    <property type="entry name" value="RecF/RecN/SMC, N-terminal domain"/>
    <property type="match status" value="1"/>
</dbReference>
<dbReference type="HAMAP" id="MF_00365">
    <property type="entry name" value="RecF"/>
    <property type="match status" value="1"/>
</dbReference>
<dbReference type="InterPro" id="IPR001238">
    <property type="entry name" value="DNA-binding_RecF"/>
</dbReference>
<dbReference type="InterPro" id="IPR018078">
    <property type="entry name" value="DNA-binding_RecF_CS"/>
</dbReference>
<dbReference type="InterPro" id="IPR027417">
    <property type="entry name" value="P-loop_NTPase"/>
</dbReference>
<dbReference type="InterPro" id="IPR038729">
    <property type="entry name" value="Rad50/SbcC_AAA"/>
</dbReference>
<dbReference type="InterPro" id="IPR042174">
    <property type="entry name" value="RecF_2"/>
</dbReference>
<dbReference type="NCBIfam" id="TIGR00611">
    <property type="entry name" value="recf"/>
    <property type="match status" value="1"/>
</dbReference>
<dbReference type="PANTHER" id="PTHR32182">
    <property type="entry name" value="DNA REPLICATION AND REPAIR PROTEIN RECF"/>
    <property type="match status" value="1"/>
</dbReference>
<dbReference type="PANTHER" id="PTHR32182:SF0">
    <property type="entry name" value="DNA REPLICATION AND REPAIR PROTEIN RECF"/>
    <property type="match status" value="1"/>
</dbReference>
<dbReference type="Pfam" id="PF13476">
    <property type="entry name" value="AAA_23"/>
    <property type="match status" value="1"/>
</dbReference>
<dbReference type="SUPFAM" id="SSF52540">
    <property type="entry name" value="P-loop containing nucleoside triphosphate hydrolases"/>
    <property type="match status" value="1"/>
</dbReference>
<dbReference type="PROSITE" id="PS00618">
    <property type="entry name" value="RECF_2"/>
    <property type="match status" value="1"/>
</dbReference>
<feature type="chain" id="PRO_1000079594" description="DNA replication and repair protein RecF">
    <location>
        <begin position="1"/>
        <end position="364"/>
    </location>
</feature>
<feature type="binding site" evidence="1">
    <location>
        <begin position="30"/>
        <end position="37"/>
    </location>
    <ligand>
        <name>ATP</name>
        <dbReference type="ChEBI" id="CHEBI:30616"/>
    </ligand>
</feature>
<accession>A5D6E6</accession>
<proteinExistence type="inferred from homology"/>